<name>RUVC_CITK8</name>
<feature type="chain" id="PRO_1000002744" description="Crossover junction endodeoxyribonuclease RuvC">
    <location>
        <begin position="1"/>
        <end position="173"/>
    </location>
</feature>
<feature type="active site" evidence="1">
    <location>
        <position position="8"/>
    </location>
</feature>
<feature type="active site" evidence="1">
    <location>
        <position position="67"/>
    </location>
</feature>
<feature type="active site" evidence="1">
    <location>
        <position position="139"/>
    </location>
</feature>
<feature type="binding site" evidence="1">
    <location>
        <position position="8"/>
    </location>
    <ligand>
        <name>Mg(2+)</name>
        <dbReference type="ChEBI" id="CHEBI:18420"/>
        <label>1</label>
    </ligand>
</feature>
<feature type="binding site" evidence="1">
    <location>
        <position position="67"/>
    </location>
    <ligand>
        <name>Mg(2+)</name>
        <dbReference type="ChEBI" id="CHEBI:18420"/>
        <label>2</label>
    </ligand>
</feature>
<feature type="binding site" evidence="1">
    <location>
        <position position="139"/>
    </location>
    <ligand>
        <name>Mg(2+)</name>
        <dbReference type="ChEBI" id="CHEBI:18420"/>
        <label>1</label>
    </ligand>
</feature>
<reference key="1">
    <citation type="submission" date="2007-08" db="EMBL/GenBank/DDBJ databases">
        <authorList>
            <consortium name="The Citrobacter koseri Genome Sequencing Project"/>
            <person name="McClelland M."/>
            <person name="Sanderson E.K."/>
            <person name="Porwollik S."/>
            <person name="Spieth J."/>
            <person name="Clifton W.S."/>
            <person name="Latreille P."/>
            <person name="Courtney L."/>
            <person name="Wang C."/>
            <person name="Pepin K."/>
            <person name="Bhonagiri V."/>
            <person name="Nash W."/>
            <person name="Johnson M."/>
            <person name="Thiruvilangam P."/>
            <person name="Wilson R."/>
        </authorList>
    </citation>
    <scope>NUCLEOTIDE SEQUENCE [LARGE SCALE GENOMIC DNA]</scope>
    <source>
        <strain>ATCC BAA-895 / CDC 4225-83 / SGSC4696</strain>
    </source>
</reference>
<comment type="function">
    <text evidence="1">The RuvA-RuvB-RuvC complex processes Holliday junction (HJ) DNA during genetic recombination and DNA repair. Endonuclease that resolves HJ intermediates. Cleaves cruciform DNA by making single-stranded nicks across the HJ at symmetrical positions within the homologous arms, yielding a 5'-phosphate and a 3'-hydroxyl group; requires a central core of homology in the junction. The consensus cleavage sequence is 5'-(A/T)TT(C/G)-3'. Cleavage occurs on the 3'-side of the TT dinucleotide at the point of strand exchange. HJ branch migration catalyzed by RuvA-RuvB allows RuvC to scan DNA until it finds its consensus sequence, where it cleaves and resolves the cruciform DNA.</text>
</comment>
<comment type="catalytic activity">
    <reaction evidence="1">
        <text>Endonucleolytic cleavage at a junction such as a reciprocal single-stranded crossover between two homologous DNA duplexes (Holliday junction).</text>
        <dbReference type="EC" id="3.1.21.10"/>
    </reaction>
</comment>
<comment type="cofactor">
    <cofactor evidence="1">
        <name>Mg(2+)</name>
        <dbReference type="ChEBI" id="CHEBI:18420"/>
    </cofactor>
    <text evidence="1">Binds 2 Mg(2+) ion per subunit.</text>
</comment>
<comment type="subunit">
    <text evidence="1">Homodimer which binds Holliday junction (HJ) DNA. The HJ becomes 2-fold symmetrical on binding to RuvC with unstacked arms; it has a different conformation from HJ DNA in complex with RuvA. In the full resolvosome a probable DNA-RuvA(4)-RuvB(12)-RuvC(2) complex forms which resolves the HJ.</text>
</comment>
<comment type="subcellular location">
    <subcellularLocation>
        <location evidence="1">Cytoplasm</location>
    </subcellularLocation>
</comment>
<comment type="similarity">
    <text evidence="1">Belongs to the RuvC family.</text>
</comment>
<dbReference type="EC" id="3.1.21.10" evidence="1"/>
<dbReference type="EMBL" id="CP000822">
    <property type="protein sequence ID" value="ABV12241.1"/>
    <property type="molecule type" value="Genomic_DNA"/>
</dbReference>
<dbReference type="RefSeq" id="WP_012131995.1">
    <property type="nucleotide sequence ID" value="NC_009792.1"/>
</dbReference>
<dbReference type="SMR" id="A8AFH8"/>
<dbReference type="STRING" id="290338.CKO_01098"/>
<dbReference type="GeneID" id="45135247"/>
<dbReference type="KEGG" id="cko:CKO_01098"/>
<dbReference type="HOGENOM" id="CLU_091257_2_1_6"/>
<dbReference type="OrthoDB" id="9805499at2"/>
<dbReference type="Proteomes" id="UP000008148">
    <property type="component" value="Chromosome"/>
</dbReference>
<dbReference type="GO" id="GO:0005737">
    <property type="term" value="C:cytoplasm"/>
    <property type="evidence" value="ECO:0007669"/>
    <property type="project" value="UniProtKB-SubCell"/>
</dbReference>
<dbReference type="GO" id="GO:0048476">
    <property type="term" value="C:Holliday junction resolvase complex"/>
    <property type="evidence" value="ECO:0007669"/>
    <property type="project" value="UniProtKB-UniRule"/>
</dbReference>
<dbReference type="GO" id="GO:0008821">
    <property type="term" value="F:crossover junction DNA endonuclease activity"/>
    <property type="evidence" value="ECO:0007669"/>
    <property type="project" value="UniProtKB-UniRule"/>
</dbReference>
<dbReference type="GO" id="GO:0003677">
    <property type="term" value="F:DNA binding"/>
    <property type="evidence" value="ECO:0007669"/>
    <property type="project" value="UniProtKB-KW"/>
</dbReference>
<dbReference type="GO" id="GO:0000287">
    <property type="term" value="F:magnesium ion binding"/>
    <property type="evidence" value="ECO:0007669"/>
    <property type="project" value="UniProtKB-UniRule"/>
</dbReference>
<dbReference type="GO" id="GO:0006310">
    <property type="term" value="P:DNA recombination"/>
    <property type="evidence" value="ECO:0007669"/>
    <property type="project" value="UniProtKB-UniRule"/>
</dbReference>
<dbReference type="GO" id="GO:0006281">
    <property type="term" value="P:DNA repair"/>
    <property type="evidence" value="ECO:0007669"/>
    <property type="project" value="UniProtKB-UniRule"/>
</dbReference>
<dbReference type="CDD" id="cd16962">
    <property type="entry name" value="RuvC"/>
    <property type="match status" value="1"/>
</dbReference>
<dbReference type="FunFam" id="3.30.420.10:FF:000002">
    <property type="entry name" value="Crossover junction endodeoxyribonuclease RuvC"/>
    <property type="match status" value="1"/>
</dbReference>
<dbReference type="Gene3D" id="3.30.420.10">
    <property type="entry name" value="Ribonuclease H-like superfamily/Ribonuclease H"/>
    <property type="match status" value="1"/>
</dbReference>
<dbReference type="HAMAP" id="MF_00034">
    <property type="entry name" value="RuvC"/>
    <property type="match status" value="1"/>
</dbReference>
<dbReference type="InterPro" id="IPR012337">
    <property type="entry name" value="RNaseH-like_sf"/>
</dbReference>
<dbReference type="InterPro" id="IPR036397">
    <property type="entry name" value="RNaseH_sf"/>
</dbReference>
<dbReference type="InterPro" id="IPR020563">
    <property type="entry name" value="X-over_junc_endoDNase_Mg_BS"/>
</dbReference>
<dbReference type="InterPro" id="IPR002176">
    <property type="entry name" value="X-over_junc_endoDNase_RuvC"/>
</dbReference>
<dbReference type="NCBIfam" id="NF000711">
    <property type="entry name" value="PRK00039.2-1"/>
    <property type="match status" value="1"/>
</dbReference>
<dbReference type="NCBIfam" id="TIGR00228">
    <property type="entry name" value="ruvC"/>
    <property type="match status" value="1"/>
</dbReference>
<dbReference type="PANTHER" id="PTHR30194">
    <property type="entry name" value="CROSSOVER JUNCTION ENDODEOXYRIBONUCLEASE RUVC"/>
    <property type="match status" value="1"/>
</dbReference>
<dbReference type="PANTHER" id="PTHR30194:SF3">
    <property type="entry name" value="CROSSOVER JUNCTION ENDODEOXYRIBONUCLEASE RUVC"/>
    <property type="match status" value="1"/>
</dbReference>
<dbReference type="Pfam" id="PF02075">
    <property type="entry name" value="RuvC"/>
    <property type="match status" value="1"/>
</dbReference>
<dbReference type="PRINTS" id="PR00696">
    <property type="entry name" value="RSOLVASERUVC"/>
</dbReference>
<dbReference type="SUPFAM" id="SSF53098">
    <property type="entry name" value="Ribonuclease H-like"/>
    <property type="match status" value="1"/>
</dbReference>
<dbReference type="PROSITE" id="PS01321">
    <property type="entry name" value="RUVC"/>
    <property type="match status" value="1"/>
</dbReference>
<protein>
    <recommendedName>
        <fullName evidence="1">Crossover junction endodeoxyribonuclease RuvC</fullName>
        <ecNumber evidence="1">3.1.21.10</ecNumber>
    </recommendedName>
    <alternativeName>
        <fullName evidence="1">Holliday junction nuclease RuvC</fullName>
    </alternativeName>
    <alternativeName>
        <fullName evidence="1">Holliday junction resolvase RuvC</fullName>
    </alternativeName>
</protein>
<proteinExistence type="inferred from homology"/>
<keyword id="KW-0963">Cytoplasm</keyword>
<keyword id="KW-0227">DNA damage</keyword>
<keyword id="KW-0233">DNA recombination</keyword>
<keyword id="KW-0234">DNA repair</keyword>
<keyword id="KW-0238">DNA-binding</keyword>
<keyword id="KW-0255">Endonuclease</keyword>
<keyword id="KW-0378">Hydrolase</keyword>
<keyword id="KW-0460">Magnesium</keyword>
<keyword id="KW-0479">Metal-binding</keyword>
<keyword id="KW-0540">Nuclease</keyword>
<keyword id="KW-1185">Reference proteome</keyword>
<gene>
    <name evidence="1" type="primary">ruvC</name>
    <name type="ordered locus">CKO_01098</name>
</gene>
<evidence type="ECO:0000255" key="1">
    <source>
        <dbReference type="HAMAP-Rule" id="MF_00034"/>
    </source>
</evidence>
<organism>
    <name type="scientific">Citrobacter koseri (strain ATCC BAA-895 / CDC 4225-83 / SGSC4696)</name>
    <dbReference type="NCBI Taxonomy" id="290338"/>
    <lineage>
        <taxon>Bacteria</taxon>
        <taxon>Pseudomonadati</taxon>
        <taxon>Pseudomonadota</taxon>
        <taxon>Gammaproteobacteria</taxon>
        <taxon>Enterobacterales</taxon>
        <taxon>Enterobacteriaceae</taxon>
        <taxon>Citrobacter</taxon>
    </lineage>
</organism>
<accession>A8AFH8</accession>
<sequence length="173" mass="18749">MSIILGIDPGSRVTGYGVIRQVGRQLTYLGSGCIRTKVDDLPSRLKLIYAGVTEIITQFQPDYFAIEQVFMAKNADSALKLGQARGVAIVAAVNQDLPVFEYAARQVKQTVVGIGSAEKSQVQHMVRTLLKLPANPQADAADALAIAITHCHVSQNAMQMSDSRLNLARGRLR</sequence>